<keyword id="KW-0067">ATP-binding</keyword>
<keyword id="KW-0315">Glutamine amidotransferase</keyword>
<keyword id="KW-0436">Ligase</keyword>
<keyword id="KW-0460">Magnesium</keyword>
<keyword id="KW-0479">Metal-binding</keyword>
<keyword id="KW-0547">Nucleotide-binding</keyword>
<keyword id="KW-0665">Pyrimidine biosynthesis</keyword>
<keyword id="KW-1185">Reference proteome</keyword>
<evidence type="ECO:0000255" key="1">
    <source>
        <dbReference type="HAMAP-Rule" id="MF_01227"/>
    </source>
</evidence>
<gene>
    <name evidence="1" type="primary">pyrG</name>
    <name type="ordered locus">Veis_2653</name>
</gene>
<reference key="1">
    <citation type="submission" date="2006-12" db="EMBL/GenBank/DDBJ databases">
        <title>Complete sequence of chromosome 1 of Verminephrobacter eiseniae EF01-2.</title>
        <authorList>
            <person name="Copeland A."/>
            <person name="Lucas S."/>
            <person name="Lapidus A."/>
            <person name="Barry K."/>
            <person name="Detter J.C."/>
            <person name="Glavina del Rio T."/>
            <person name="Dalin E."/>
            <person name="Tice H."/>
            <person name="Pitluck S."/>
            <person name="Chertkov O."/>
            <person name="Brettin T."/>
            <person name="Bruce D."/>
            <person name="Han C."/>
            <person name="Tapia R."/>
            <person name="Gilna P."/>
            <person name="Schmutz J."/>
            <person name="Larimer F."/>
            <person name="Land M."/>
            <person name="Hauser L."/>
            <person name="Kyrpides N."/>
            <person name="Kim E."/>
            <person name="Stahl D."/>
            <person name="Richardson P."/>
        </authorList>
    </citation>
    <scope>NUCLEOTIDE SEQUENCE [LARGE SCALE GENOMIC DNA]</scope>
    <source>
        <strain>EF01-2</strain>
    </source>
</reference>
<name>PYRG_VEREI</name>
<dbReference type="EC" id="6.3.4.2" evidence="1"/>
<dbReference type="EMBL" id="CP000542">
    <property type="protein sequence ID" value="ABM58396.1"/>
    <property type="molecule type" value="Genomic_DNA"/>
</dbReference>
<dbReference type="RefSeq" id="WP_011810395.1">
    <property type="nucleotide sequence ID" value="NC_008786.1"/>
</dbReference>
<dbReference type="SMR" id="A1WL89"/>
<dbReference type="STRING" id="391735.Veis_2653"/>
<dbReference type="GeneID" id="76461164"/>
<dbReference type="KEGG" id="vei:Veis_2653"/>
<dbReference type="eggNOG" id="COG0504">
    <property type="taxonomic scope" value="Bacteria"/>
</dbReference>
<dbReference type="HOGENOM" id="CLU_011675_5_0_4"/>
<dbReference type="OrthoDB" id="9801107at2"/>
<dbReference type="UniPathway" id="UPA00159">
    <property type="reaction ID" value="UER00277"/>
</dbReference>
<dbReference type="Proteomes" id="UP000000374">
    <property type="component" value="Chromosome"/>
</dbReference>
<dbReference type="GO" id="GO:0005829">
    <property type="term" value="C:cytosol"/>
    <property type="evidence" value="ECO:0007669"/>
    <property type="project" value="TreeGrafter"/>
</dbReference>
<dbReference type="GO" id="GO:0005524">
    <property type="term" value="F:ATP binding"/>
    <property type="evidence" value="ECO:0007669"/>
    <property type="project" value="UniProtKB-KW"/>
</dbReference>
<dbReference type="GO" id="GO:0003883">
    <property type="term" value="F:CTP synthase activity"/>
    <property type="evidence" value="ECO:0007669"/>
    <property type="project" value="UniProtKB-UniRule"/>
</dbReference>
<dbReference type="GO" id="GO:0004359">
    <property type="term" value="F:glutaminase activity"/>
    <property type="evidence" value="ECO:0007669"/>
    <property type="project" value="RHEA"/>
</dbReference>
<dbReference type="GO" id="GO:0042802">
    <property type="term" value="F:identical protein binding"/>
    <property type="evidence" value="ECO:0007669"/>
    <property type="project" value="TreeGrafter"/>
</dbReference>
<dbReference type="GO" id="GO:0046872">
    <property type="term" value="F:metal ion binding"/>
    <property type="evidence" value="ECO:0007669"/>
    <property type="project" value="UniProtKB-KW"/>
</dbReference>
<dbReference type="GO" id="GO:0044210">
    <property type="term" value="P:'de novo' CTP biosynthetic process"/>
    <property type="evidence" value="ECO:0007669"/>
    <property type="project" value="UniProtKB-UniRule"/>
</dbReference>
<dbReference type="GO" id="GO:0019856">
    <property type="term" value="P:pyrimidine nucleobase biosynthetic process"/>
    <property type="evidence" value="ECO:0007669"/>
    <property type="project" value="TreeGrafter"/>
</dbReference>
<dbReference type="CDD" id="cd03113">
    <property type="entry name" value="CTPS_N"/>
    <property type="match status" value="1"/>
</dbReference>
<dbReference type="CDD" id="cd01746">
    <property type="entry name" value="GATase1_CTP_Synthase"/>
    <property type="match status" value="1"/>
</dbReference>
<dbReference type="FunFam" id="3.40.50.300:FF:000009">
    <property type="entry name" value="CTP synthase"/>
    <property type="match status" value="1"/>
</dbReference>
<dbReference type="FunFam" id="3.40.50.880:FF:000002">
    <property type="entry name" value="CTP synthase"/>
    <property type="match status" value="1"/>
</dbReference>
<dbReference type="Gene3D" id="3.40.50.880">
    <property type="match status" value="1"/>
</dbReference>
<dbReference type="Gene3D" id="3.40.50.300">
    <property type="entry name" value="P-loop containing nucleotide triphosphate hydrolases"/>
    <property type="match status" value="1"/>
</dbReference>
<dbReference type="HAMAP" id="MF_01227">
    <property type="entry name" value="PyrG"/>
    <property type="match status" value="1"/>
</dbReference>
<dbReference type="InterPro" id="IPR029062">
    <property type="entry name" value="Class_I_gatase-like"/>
</dbReference>
<dbReference type="InterPro" id="IPR004468">
    <property type="entry name" value="CTP_synthase"/>
</dbReference>
<dbReference type="InterPro" id="IPR017456">
    <property type="entry name" value="CTP_synthase_N"/>
</dbReference>
<dbReference type="InterPro" id="IPR017926">
    <property type="entry name" value="GATASE"/>
</dbReference>
<dbReference type="InterPro" id="IPR033828">
    <property type="entry name" value="GATase1_CTP_Synthase"/>
</dbReference>
<dbReference type="InterPro" id="IPR027417">
    <property type="entry name" value="P-loop_NTPase"/>
</dbReference>
<dbReference type="NCBIfam" id="NF003792">
    <property type="entry name" value="PRK05380.1"/>
    <property type="match status" value="1"/>
</dbReference>
<dbReference type="NCBIfam" id="TIGR00337">
    <property type="entry name" value="PyrG"/>
    <property type="match status" value="1"/>
</dbReference>
<dbReference type="PANTHER" id="PTHR11550">
    <property type="entry name" value="CTP SYNTHASE"/>
    <property type="match status" value="1"/>
</dbReference>
<dbReference type="PANTHER" id="PTHR11550:SF0">
    <property type="entry name" value="CTP SYNTHASE-RELATED"/>
    <property type="match status" value="1"/>
</dbReference>
<dbReference type="Pfam" id="PF06418">
    <property type="entry name" value="CTP_synth_N"/>
    <property type="match status" value="1"/>
</dbReference>
<dbReference type="Pfam" id="PF00117">
    <property type="entry name" value="GATase"/>
    <property type="match status" value="1"/>
</dbReference>
<dbReference type="SUPFAM" id="SSF52317">
    <property type="entry name" value="Class I glutamine amidotransferase-like"/>
    <property type="match status" value="1"/>
</dbReference>
<dbReference type="SUPFAM" id="SSF52540">
    <property type="entry name" value="P-loop containing nucleoside triphosphate hydrolases"/>
    <property type="match status" value="1"/>
</dbReference>
<dbReference type="PROSITE" id="PS51273">
    <property type="entry name" value="GATASE_TYPE_1"/>
    <property type="match status" value="1"/>
</dbReference>
<sequence length="554" mass="61306">MTKFVFVTGGVVSSLGKGIASASLAAILESRGLKVTLIKLDPYINVDPGTMSPFQHGEVFVTDDGAETDLDLGHYERFIETRMNRANNFTTGKIYQSVLEKERRGDYLGKTVQVIPHVTNEIQEFIQRGAGMGTPVAVDVAIVEIGGTVGDIESLPFLEAVRQMSLRMGANNSTFVHLTYLPWIATAGELKTKPTQHTVQKLREIGIQADALLCRADRRIPGEERAKISLFTNVPEWGVISMWDVDIIYKVPRMLHEQGLDGLICDKLRLNTRPTNLQRWDDLVYATEHPQGAVTVAMVGKYVDLSDSYKSVNEALRHAGMRNHVRVQIDHVDSETIDSADAAARLARYDAILVPGGFGQRGVEGKIATARYAREHKLPYLGICLGMQVATIEYARHVAGLANANSTEFDPATPHPVIALITEWQDADGSIQQRDQDSNLGGTMRLGAQSSDVLAGTLAHRIYGDVVTERHRHRYEANVNYLEPLRKAGLVIAALTQREQLTEIVELPQSMHPWFIGVQFHPEFKSTPWNGHPLFNSFIAAAKARHQARHEGPA</sequence>
<comment type="function">
    <text evidence="1">Catalyzes the ATP-dependent amination of UTP to CTP with either L-glutamine or ammonia as the source of nitrogen. Regulates intracellular CTP levels through interactions with the four ribonucleotide triphosphates.</text>
</comment>
<comment type="catalytic activity">
    <reaction evidence="1">
        <text>UTP + L-glutamine + ATP + H2O = CTP + L-glutamate + ADP + phosphate + 2 H(+)</text>
        <dbReference type="Rhea" id="RHEA:26426"/>
        <dbReference type="ChEBI" id="CHEBI:15377"/>
        <dbReference type="ChEBI" id="CHEBI:15378"/>
        <dbReference type="ChEBI" id="CHEBI:29985"/>
        <dbReference type="ChEBI" id="CHEBI:30616"/>
        <dbReference type="ChEBI" id="CHEBI:37563"/>
        <dbReference type="ChEBI" id="CHEBI:43474"/>
        <dbReference type="ChEBI" id="CHEBI:46398"/>
        <dbReference type="ChEBI" id="CHEBI:58359"/>
        <dbReference type="ChEBI" id="CHEBI:456216"/>
        <dbReference type="EC" id="6.3.4.2"/>
    </reaction>
</comment>
<comment type="catalytic activity">
    <reaction evidence="1">
        <text>L-glutamine + H2O = L-glutamate + NH4(+)</text>
        <dbReference type="Rhea" id="RHEA:15889"/>
        <dbReference type="ChEBI" id="CHEBI:15377"/>
        <dbReference type="ChEBI" id="CHEBI:28938"/>
        <dbReference type="ChEBI" id="CHEBI:29985"/>
        <dbReference type="ChEBI" id="CHEBI:58359"/>
    </reaction>
</comment>
<comment type="catalytic activity">
    <reaction evidence="1">
        <text>UTP + NH4(+) + ATP = CTP + ADP + phosphate + 2 H(+)</text>
        <dbReference type="Rhea" id="RHEA:16597"/>
        <dbReference type="ChEBI" id="CHEBI:15378"/>
        <dbReference type="ChEBI" id="CHEBI:28938"/>
        <dbReference type="ChEBI" id="CHEBI:30616"/>
        <dbReference type="ChEBI" id="CHEBI:37563"/>
        <dbReference type="ChEBI" id="CHEBI:43474"/>
        <dbReference type="ChEBI" id="CHEBI:46398"/>
        <dbReference type="ChEBI" id="CHEBI:456216"/>
    </reaction>
</comment>
<comment type="activity regulation">
    <text evidence="1">Allosterically activated by GTP, when glutamine is the substrate; GTP has no effect on the reaction when ammonia is the substrate. The allosteric effector GTP functions by stabilizing the protein conformation that binds the tetrahedral intermediate(s) formed during glutamine hydrolysis. Inhibited by the product CTP, via allosteric rather than competitive inhibition.</text>
</comment>
<comment type="pathway">
    <text evidence="1">Pyrimidine metabolism; CTP biosynthesis via de novo pathway; CTP from UDP: step 2/2.</text>
</comment>
<comment type="subunit">
    <text evidence="1">Homotetramer.</text>
</comment>
<comment type="miscellaneous">
    <text evidence="1">CTPSs have evolved a hybrid strategy for distinguishing between UTP and CTP. The overlapping regions of the product feedback inhibitory and substrate sites recognize a common feature in both compounds, the triphosphate moiety. To differentiate isosteric substrate and product pyrimidine rings, an additional pocket far from the expected kinase/ligase catalytic site, specifically recognizes the cytosine and ribose portions of the product inhibitor.</text>
</comment>
<comment type="similarity">
    <text evidence="1">Belongs to the CTP synthase family.</text>
</comment>
<protein>
    <recommendedName>
        <fullName evidence="1">CTP synthase</fullName>
        <ecNumber evidence="1">6.3.4.2</ecNumber>
    </recommendedName>
    <alternativeName>
        <fullName evidence="1">Cytidine 5'-triphosphate synthase</fullName>
    </alternativeName>
    <alternativeName>
        <fullName evidence="1">Cytidine triphosphate synthetase</fullName>
        <shortName evidence="1">CTP synthetase</shortName>
        <shortName evidence="1">CTPS</shortName>
    </alternativeName>
    <alternativeName>
        <fullName evidence="1">UTP--ammonia ligase</fullName>
    </alternativeName>
</protein>
<feature type="chain" id="PRO_1000139598" description="CTP synthase">
    <location>
        <begin position="1"/>
        <end position="554"/>
    </location>
</feature>
<feature type="domain" description="Glutamine amidotransferase type-1" evidence="1">
    <location>
        <begin position="295"/>
        <end position="548"/>
    </location>
</feature>
<feature type="region of interest" description="Amidoligase domain" evidence="1">
    <location>
        <begin position="1"/>
        <end position="270"/>
    </location>
</feature>
<feature type="active site" description="Nucleophile; for glutamine hydrolysis" evidence="1">
    <location>
        <position position="384"/>
    </location>
</feature>
<feature type="active site" evidence="1">
    <location>
        <position position="521"/>
    </location>
</feature>
<feature type="active site" evidence="1">
    <location>
        <position position="523"/>
    </location>
</feature>
<feature type="binding site" evidence="1">
    <location>
        <position position="13"/>
    </location>
    <ligand>
        <name>CTP</name>
        <dbReference type="ChEBI" id="CHEBI:37563"/>
        <note>allosteric inhibitor</note>
    </ligand>
</feature>
<feature type="binding site" evidence="1">
    <location>
        <position position="13"/>
    </location>
    <ligand>
        <name>UTP</name>
        <dbReference type="ChEBI" id="CHEBI:46398"/>
    </ligand>
</feature>
<feature type="binding site" evidence="1">
    <location>
        <begin position="14"/>
        <end position="19"/>
    </location>
    <ligand>
        <name>ATP</name>
        <dbReference type="ChEBI" id="CHEBI:30616"/>
    </ligand>
</feature>
<feature type="binding site" evidence="1">
    <location>
        <position position="71"/>
    </location>
    <ligand>
        <name>ATP</name>
        <dbReference type="ChEBI" id="CHEBI:30616"/>
    </ligand>
</feature>
<feature type="binding site" evidence="1">
    <location>
        <position position="71"/>
    </location>
    <ligand>
        <name>Mg(2+)</name>
        <dbReference type="ChEBI" id="CHEBI:18420"/>
    </ligand>
</feature>
<feature type="binding site" evidence="1">
    <location>
        <position position="144"/>
    </location>
    <ligand>
        <name>Mg(2+)</name>
        <dbReference type="ChEBI" id="CHEBI:18420"/>
    </ligand>
</feature>
<feature type="binding site" evidence="1">
    <location>
        <begin position="151"/>
        <end position="153"/>
    </location>
    <ligand>
        <name>CTP</name>
        <dbReference type="ChEBI" id="CHEBI:37563"/>
        <note>allosteric inhibitor</note>
    </ligand>
</feature>
<feature type="binding site" evidence="1">
    <location>
        <begin position="191"/>
        <end position="196"/>
    </location>
    <ligand>
        <name>CTP</name>
        <dbReference type="ChEBI" id="CHEBI:37563"/>
        <note>allosteric inhibitor</note>
    </ligand>
</feature>
<feature type="binding site" evidence="1">
    <location>
        <begin position="191"/>
        <end position="196"/>
    </location>
    <ligand>
        <name>UTP</name>
        <dbReference type="ChEBI" id="CHEBI:46398"/>
    </ligand>
</feature>
<feature type="binding site" evidence="1">
    <location>
        <position position="227"/>
    </location>
    <ligand>
        <name>CTP</name>
        <dbReference type="ChEBI" id="CHEBI:37563"/>
        <note>allosteric inhibitor</note>
    </ligand>
</feature>
<feature type="binding site" evidence="1">
    <location>
        <position position="227"/>
    </location>
    <ligand>
        <name>UTP</name>
        <dbReference type="ChEBI" id="CHEBI:46398"/>
    </ligand>
</feature>
<feature type="binding site" evidence="1">
    <location>
        <position position="357"/>
    </location>
    <ligand>
        <name>L-glutamine</name>
        <dbReference type="ChEBI" id="CHEBI:58359"/>
    </ligand>
</feature>
<feature type="binding site" evidence="1">
    <location>
        <begin position="385"/>
        <end position="388"/>
    </location>
    <ligand>
        <name>L-glutamine</name>
        <dbReference type="ChEBI" id="CHEBI:58359"/>
    </ligand>
</feature>
<feature type="binding site" evidence="1">
    <location>
        <position position="408"/>
    </location>
    <ligand>
        <name>L-glutamine</name>
        <dbReference type="ChEBI" id="CHEBI:58359"/>
    </ligand>
</feature>
<feature type="binding site" evidence="1">
    <location>
        <position position="474"/>
    </location>
    <ligand>
        <name>L-glutamine</name>
        <dbReference type="ChEBI" id="CHEBI:58359"/>
    </ligand>
</feature>
<accession>A1WL89</accession>
<organism>
    <name type="scientific">Verminephrobacter eiseniae (strain EF01-2)</name>
    <dbReference type="NCBI Taxonomy" id="391735"/>
    <lineage>
        <taxon>Bacteria</taxon>
        <taxon>Pseudomonadati</taxon>
        <taxon>Pseudomonadota</taxon>
        <taxon>Betaproteobacteria</taxon>
        <taxon>Burkholderiales</taxon>
        <taxon>Comamonadaceae</taxon>
        <taxon>Verminephrobacter</taxon>
    </lineage>
</organism>
<proteinExistence type="inferred from homology"/>